<organism>
    <name type="scientific">Oryctolagus cuniculus</name>
    <name type="common">Rabbit</name>
    <dbReference type="NCBI Taxonomy" id="9986"/>
    <lineage>
        <taxon>Eukaryota</taxon>
        <taxon>Metazoa</taxon>
        <taxon>Chordata</taxon>
        <taxon>Craniata</taxon>
        <taxon>Vertebrata</taxon>
        <taxon>Euteleostomi</taxon>
        <taxon>Mammalia</taxon>
        <taxon>Eutheria</taxon>
        <taxon>Euarchontoglires</taxon>
        <taxon>Glires</taxon>
        <taxon>Lagomorpha</taxon>
        <taxon>Leporidae</taxon>
        <taxon>Oryctolagus</taxon>
    </lineage>
</organism>
<protein>
    <recommendedName>
        <fullName>Ezrin</fullName>
    </recommendedName>
    <alternativeName>
        <fullName>Cytovillin</fullName>
    </alternativeName>
    <alternativeName>
        <fullName>Villin-2</fullName>
    </alternativeName>
    <alternativeName>
        <fullName>p81</fullName>
    </alternativeName>
</protein>
<evidence type="ECO:0000250" key="1"/>
<evidence type="ECO:0000250" key="2">
    <source>
        <dbReference type="UniProtKB" id="P15311"/>
    </source>
</evidence>
<evidence type="ECO:0000250" key="3">
    <source>
        <dbReference type="UniProtKB" id="P26040"/>
    </source>
</evidence>
<evidence type="ECO:0000250" key="4">
    <source>
        <dbReference type="UniProtKB" id="P31976"/>
    </source>
</evidence>
<evidence type="ECO:0000250" key="5">
    <source>
        <dbReference type="UniProtKB" id="P31977"/>
    </source>
</evidence>
<evidence type="ECO:0000255" key="6"/>
<evidence type="ECO:0000255" key="7">
    <source>
        <dbReference type="PROSITE-ProRule" id="PRU00084"/>
    </source>
</evidence>
<evidence type="ECO:0000256" key="8">
    <source>
        <dbReference type="SAM" id="MobiDB-lite"/>
    </source>
</evidence>
<evidence type="ECO:0000269" key="9">
    <source>
    </source>
</evidence>
<evidence type="ECO:0000269" key="10">
    <source>
    </source>
</evidence>
<reference key="1">
    <citation type="submission" date="2002-08" db="EMBL/GenBank/DDBJ databases">
        <authorList>
            <person name="Goldenring J.R."/>
        </authorList>
    </citation>
    <scope>NUCLEOTIDE SEQUENCE [MRNA]</scope>
    <source>
        <strain>New Zealand white</strain>
    </source>
</reference>
<reference key="2">
    <citation type="journal article" date="2005" name="J. Biol. Chem.">
        <title>PALS1 specifies the localization of Ezrin to the apical membrane of gastric parietal cells.</title>
        <authorList>
            <person name="Cao X."/>
            <person name="Ding X."/>
            <person name="Guo Z."/>
            <person name="Zhou R."/>
            <person name="Wang F."/>
            <person name="Long F."/>
            <person name="Wu F."/>
            <person name="Bi F."/>
            <person name="Wang Q."/>
            <person name="Fan D."/>
            <person name="Forte J.G."/>
            <person name="Teng M."/>
            <person name="Yao X."/>
        </authorList>
    </citation>
    <scope>INTERACTION WITH PALS1</scope>
    <scope>SUBCELLULAR LOCATION</scope>
</reference>
<reference key="3">
    <citation type="journal article" date="2006" name="Mol. Biol. Cell">
        <title>The NHE3 juxtamembrane cytoplasmic domain directly binds ezrin: dual role in NHE3 trafficking and mobility in the brush border.</title>
        <authorList>
            <person name="Cha B."/>
            <person name="Tse M."/>
            <person name="Yun C."/>
            <person name="Kovbasnjuk O."/>
            <person name="Mohan S."/>
            <person name="Hubbard A."/>
            <person name="Arpin M."/>
            <person name="Donowitz M."/>
        </authorList>
    </citation>
    <scope>INTERACTION WITH SLC9A3</scope>
</reference>
<sequence length="586" mass="69220">MPKPINVRVTTMDAELEFAVQPNTTGKQLFDQVVKTIGLREVWYFGLQYVDNKGFPTWLKLDKKVSAQEVRKENPVQFKFRAKFYPEDVSEELIQDITQKLFFLQVKEGILSDEIYCPPETAVLLGSYAVQAKFGDYSKEAHKAGYLSSERLIPQRVMDQHKLSRDQWEDRIQVWHAEHRGMLKDSAMLEYLKIAQDLEMYGINYFEIKNKKGTDLWLGVDALGLNIYEKNDKLTPKIGFPWSEIRNISFNDKKFVIKPIDKKAPDFVFYAPRLRINKRILQLCMGNHELYMRRRKPDTIEVQQMKAQAREEKHQKQLERQQLESEKKRREAVEQEKEQMLREKEELMMRLQDYEQKTKKAEKELSDQIQRALQLEDERKRAQEESERLEADRVAALRAKEELERQAADQIKSQEQLAAELAEYTAKIALLEEARRRKESEVEEWQHRAREAQDDLVKTKEELHLVMTAPPPPPPPMYEPVSYHVQEHLHEEGAESLGYSAELSSEGILDDRHEEKRITEAEKNERVQRQLLTLSNELSQARDENKRTHNDIIHNENLRQGRDKYKTLRQIRQGNTKQRIDEFEAM</sequence>
<comment type="function">
    <text evidence="1">Probably involved in connections of major cytoskeletal structures to the plasma membrane (By similarity). In epithelial cells, required for the formation of microvilli and membrane ruffles on the apical pole. Along with PLEKHG6, required for normal macropinocytosis (By similarity).</text>
</comment>
<comment type="activity regulation">
    <text evidence="1">A head-to-tail association, of the N-terminal and C-terminal halves results in a closed conformation (inactive form) which is incapable of actin or membrane-binding.</text>
</comment>
<comment type="subunit">
    <text evidence="2 3 4 5 9 10">Interacts with PALS1 (PubMed:15677456). Found in a complex with EZR, PODXL and NHERF2. Interacts with MCC, PLEKHG6, PODXL, SCYL3/PACE1, NHERF1, NHERF2 and TMEM8B. Interacts (when phosphorylated) with FES/FPS. Interacts with dimeric S100P, the interaction may be activating through unmasking of F-actin binding sites. Identified in complexes that contain VIM, EZR, AHNAK, BFSP1, BFSP2, ANK2, PLEC, PRX and spectrin. Detected in a complex composed of at least EZR, AHNAK, PPL and PRX. Interacts with PDPN (via cytoplasmic domain); activates RHOA and promotes epithelial-mesenchymal transition. Interacts with SPN/CD43 cytoplasmic tail, CD44 and ICAM2 (By similarity). Interacts with SLC9A3; interaction targets SLC9A3 to the apical membrane (PubMed:16540524). Interacts with SLC9A1; regulates interactions of SLC9A1 with cytoskeletal and promotes stress fiber formation (By similarity). Interacts with CLIC5; may work together in a complex which also includes RDX and MYO6 to stabilize linkages between the plasma membrane and subjacent actin cytoskeleton at the base of stereocilia (By similarity).</text>
</comment>
<comment type="subcellular location">
    <subcellularLocation>
        <location evidence="2">Apical cell membrane</location>
        <topology evidence="2">Peripheral membrane protein</topology>
        <orientation evidence="2">Cytoplasmic side</orientation>
    </subcellularLocation>
    <subcellularLocation>
        <location evidence="2">Cell projection</location>
    </subcellularLocation>
    <subcellularLocation>
        <location evidence="2">Cell projection</location>
        <location evidence="2">Microvillus membrane</location>
        <topology evidence="2">Peripheral membrane protein</topology>
        <orientation evidence="2">Cytoplasmic side</orientation>
    </subcellularLocation>
    <subcellularLocation>
        <location evidence="2">Cell projection</location>
        <location evidence="2">Ruffle membrane</location>
        <topology evidence="2">Peripheral membrane protein</topology>
        <orientation evidence="2">Cytoplasmic side</orientation>
    </subcellularLocation>
    <subcellularLocation>
        <location evidence="2">Cytoplasm</location>
        <location evidence="2">Cell cortex</location>
    </subcellularLocation>
    <subcellularLocation>
        <location evidence="2">Cytoplasm</location>
        <location evidence="2">Cytoskeleton</location>
    </subcellularLocation>
    <subcellularLocation>
        <location evidence="3">Cell projection</location>
        <location evidence="3">Microvillus</location>
    </subcellularLocation>
    <text evidence="2 5 9">Localizes to cell extensions and peripheral processes of astrocytes (By similarity). Microvillar peripheral membrane protein (cytoplasmic side). Localization to the apical membrane of parietal cells depends on the interaction with PALS1.</text>
</comment>
<comment type="domain">
    <text evidence="2">Has three main structural domains: an N-terminal FERM domain, a central alpha-helical domain and a C-terminal actin-binding domain.</text>
</comment>
<comment type="domain">
    <text evidence="2">The FERM domain is organized in a clover-shaped structure that comprises three subdomains identified as F1 (residues 2-82), F2 (residues 96-198), and F3 (residues 204-296). In the active form, the subdomain F3 adopts two mutually exclusive conformational isomers where a row of four phenylalanine side chains (Phe250, Phe255, Phe267 and Phe269) must point in the same direction. In the autoinhibited form, the F3 subdomain interacts with the C-terminal domain (residues 516-586) and stabilizes the structure, selecting only one possible arrangement of phenylalanine side chains. The FERM domain mediates binding to membrane lipids and signaling molecules.</text>
</comment>
<comment type="domain">
    <text evidence="2">The central alpha-helical domain is composed of two alpha helices (residues 326-406 and 417-466) connected by a linker. It protrudes from the FERM domain forming a coiled coil structure where the linker can have either a loop or a helix conformation. The monomer is predicted to form an intra-molecular helix-loop-helix coiled coil structure. Whereas the dimer adopts an elongated dumbbell-shaped configuration where continuous alpha helices from each protomer are organized in a antiparallel coiled coil structure that connect FERM:C-terminal domain swapped complex at each end. The dimer is predicted to link actin filaments parallel to the plasma membrane.</text>
</comment>
<comment type="domain">
    <text evidence="2">The [IL]-x-C-x-x-[DE] motif is a proposed target motif for cysteine S-nitrosylation mediated by the iNOS-S100A8/A9 transnitrosylase complex.</text>
</comment>
<comment type="PTM">
    <text evidence="1">Phosphorylated by tyrosine-protein kinases. Phosphorylation by ROCK2 suppresses the head-to-tail association of the N-terminal and C-terminal halves resulting in an opened conformation which is capable of actin and membrane-binding (By similarity).</text>
</comment>
<comment type="PTM">
    <text evidence="2">S-nitrosylation is induced by interferon-gamma and oxidatively-modified low-densitity lipoprotein (LDL(ox)) possibly implicating the iNOS-S100A8/9 transnitrosylase complex.</text>
</comment>
<gene>
    <name type="primary">EZR</name>
    <name type="synonym">VIL2</name>
</gene>
<accession>Q8HZQ5</accession>
<name>EZRI_RABIT</name>
<keyword id="KW-0007">Acetylation</keyword>
<keyword id="KW-1003">Cell membrane</keyword>
<keyword id="KW-0966">Cell projection</keyword>
<keyword id="KW-0133">Cell shape</keyword>
<keyword id="KW-0175">Coiled coil</keyword>
<keyword id="KW-0963">Cytoplasm</keyword>
<keyword id="KW-0206">Cytoskeleton</keyword>
<keyword id="KW-0472">Membrane</keyword>
<keyword id="KW-0597">Phosphoprotein</keyword>
<keyword id="KW-1185">Reference proteome</keyword>
<keyword id="KW-0702">S-nitrosylation</keyword>
<feature type="chain" id="PRO_0000219410" description="Ezrin">
    <location>
        <begin position="1"/>
        <end position="586"/>
    </location>
</feature>
<feature type="domain" description="FERM" evidence="7">
    <location>
        <begin position="2"/>
        <end position="295"/>
    </location>
</feature>
<feature type="region of interest" description="Interaction with SCYL3" evidence="1">
    <location>
        <begin position="244"/>
        <end position="586"/>
    </location>
</feature>
<feature type="region of interest" description="Disordered" evidence="8">
    <location>
        <begin position="305"/>
        <end position="340"/>
    </location>
</feature>
<feature type="coiled-coil region" evidence="6">
    <location>
        <begin position="302"/>
        <end position="462"/>
    </location>
</feature>
<feature type="short sequence motif" description="[IL]-x-C-x-x-[DE] motif" evidence="2">
    <location>
        <begin position="115"/>
        <end position="120"/>
    </location>
</feature>
<feature type="compositionally biased region" description="Basic and acidic residues" evidence="8">
    <location>
        <begin position="308"/>
        <end position="340"/>
    </location>
</feature>
<feature type="modified residue" description="N6-acetyllysine" evidence="2">
    <location>
        <position position="60"/>
    </location>
</feature>
<feature type="modified residue" description="Phosphotyrosine; by PDGFR" evidence="2">
    <location>
        <position position="146"/>
    </location>
</feature>
<feature type="modified residue" description="Phosphotyrosine; by PDGFR" evidence="2">
    <location>
        <position position="354"/>
    </location>
</feature>
<feature type="modified residue" description="Phosphoserine" evidence="2">
    <location>
        <position position="366"/>
    </location>
</feature>
<feature type="modified residue" description="Phosphotyrosine" evidence="2">
    <location>
        <position position="478"/>
    </location>
</feature>
<feature type="modified residue" description="Phosphoserine" evidence="3">
    <location>
        <position position="535"/>
    </location>
</feature>
<feature type="modified residue" description="Phosphothreonine; by ROCK2 and PKC/PRKCI" evidence="2">
    <location>
        <position position="567"/>
    </location>
</feature>
<proteinExistence type="evidence at protein level"/>
<dbReference type="EMBL" id="AF537266">
    <property type="protein sequence ID" value="AAN06818.1"/>
    <property type="molecule type" value="mRNA"/>
</dbReference>
<dbReference type="RefSeq" id="NP_001075591.1">
    <property type="nucleotide sequence ID" value="NM_001082122.1"/>
</dbReference>
<dbReference type="SMR" id="Q8HZQ5"/>
<dbReference type="FunCoup" id="Q8HZQ5">
    <property type="interactions" value="914"/>
</dbReference>
<dbReference type="STRING" id="9986.ENSOCUP00000040029"/>
<dbReference type="PaxDb" id="9986-ENSOCUP00000003322"/>
<dbReference type="GeneID" id="100008846"/>
<dbReference type="KEGG" id="ocu:100008846"/>
<dbReference type="CTD" id="7430"/>
<dbReference type="eggNOG" id="KOG3529">
    <property type="taxonomic scope" value="Eukaryota"/>
</dbReference>
<dbReference type="InParanoid" id="Q8HZQ5"/>
<dbReference type="OrthoDB" id="6018897at2759"/>
<dbReference type="Proteomes" id="UP000001811">
    <property type="component" value="Unplaced"/>
</dbReference>
<dbReference type="GO" id="GO:0015629">
    <property type="term" value="C:actin cytoskeleton"/>
    <property type="evidence" value="ECO:0000250"/>
    <property type="project" value="UniProtKB"/>
</dbReference>
<dbReference type="GO" id="GO:0005884">
    <property type="term" value="C:actin filament"/>
    <property type="evidence" value="ECO:0000250"/>
    <property type="project" value="UniProtKB"/>
</dbReference>
<dbReference type="GO" id="GO:0016324">
    <property type="term" value="C:apical plasma membrane"/>
    <property type="evidence" value="ECO:0007669"/>
    <property type="project" value="UniProtKB-SubCell"/>
</dbReference>
<dbReference type="GO" id="GO:0016323">
    <property type="term" value="C:basolateral plasma membrane"/>
    <property type="evidence" value="ECO:0000250"/>
    <property type="project" value="UniProtKB"/>
</dbReference>
<dbReference type="GO" id="GO:0005938">
    <property type="term" value="C:cell cortex"/>
    <property type="evidence" value="ECO:0007669"/>
    <property type="project" value="UniProtKB-SubCell"/>
</dbReference>
<dbReference type="GO" id="GO:0005902">
    <property type="term" value="C:microvillus"/>
    <property type="evidence" value="ECO:0000250"/>
    <property type="project" value="UniProtKB"/>
</dbReference>
<dbReference type="GO" id="GO:0031528">
    <property type="term" value="C:microvillus membrane"/>
    <property type="evidence" value="ECO:0000250"/>
    <property type="project" value="UniProtKB"/>
</dbReference>
<dbReference type="GO" id="GO:0005886">
    <property type="term" value="C:plasma membrane"/>
    <property type="evidence" value="ECO:0000250"/>
    <property type="project" value="UniProtKB"/>
</dbReference>
<dbReference type="GO" id="GO:0032587">
    <property type="term" value="C:ruffle membrane"/>
    <property type="evidence" value="ECO:0007669"/>
    <property type="project" value="UniProtKB-SubCell"/>
</dbReference>
<dbReference type="GO" id="GO:0051015">
    <property type="term" value="F:actin filament binding"/>
    <property type="evidence" value="ECO:0000250"/>
    <property type="project" value="UniProtKB"/>
</dbReference>
<dbReference type="GO" id="GO:0050839">
    <property type="term" value="F:cell adhesion molecule binding"/>
    <property type="evidence" value="ECO:0000250"/>
    <property type="project" value="UniProtKB"/>
</dbReference>
<dbReference type="GO" id="GO:0051017">
    <property type="term" value="P:actin filament bundle assembly"/>
    <property type="evidence" value="ECO:0000250"/>
    <property type="project" value="UniProtKB"/>
</dbReference>
<dbReference type="GO" id="GO:0008360">
    <property type="term" value="P:regulation of cell shape"/>
    <property type="evidence" value="ECO:0007669"/>
    <property type="project" value="UniProtKB-KW"/>
</dbReference>
<dbReference type="CDD" id="cd14473">
    <property type="entry name" value="FERM_B-lobe"/>
    <property type="match status" value="1"/>
</dbReference>
<dbReference type="CDD" id="cd13194">
    <property type="entry name" value="FERM_C_ERM"/>
    <property type="match status" value="1"/>
</dbReference>
<dbReference type="CDD" id="cd17239">
    <property type="entry name" value="FERM_F1_Ezrin"/>
    <property type="match status" value="1"/>
</dbReference>
<dbReference type="FunFam" id="2.30.29.30:FF:000003">
    <property type="entry name" value="Radixin isoform 1"/>
    <property type="match status" value="1"/>
</dbReference>
<dbReference type="FunFam" id="1.20.80.10:FF:000002">
    <property type="entry name" value="radixin isoform X1"/>
    <property type="match status" value="1"/>
</dbReference>
<dbReference type="FunFam" id="3.10.20.90:FF:000013">
    <property type="entry name" value="radixin isoform X1"/>
    <property type="match status" value="1"/>
</dbReference>
<dbReference type="FunFam" id="1.20.5.450:FF:000001">
    <property type="entry name" value="radixin isoform X2"/>
    <property type="match status" value="1"/>
</dbReference>
<dbReference type="Gene3D" id="1.20.5.450">
    <property type="match status" value="1"/>
</dbReference>
<dbReference type="Gene3D" id="1.20.80.10">
    <property type="match status" value="1"/>
</dbReference>
<dbReference type="Gene3D" id="6.10.360.10">
    <property type="match status" value="1"/>
</dbReference>
<dbReference type="Gene3D" id="3.10.20.90">
    <property type="entry name" value="Phosphatidylinositol 3-kinase Catalytic Subunit, Chain A, domain 1"/>
    <property type="match status" value="1"/>
</dbReference>
<dbReference type="Gene3D" id="2.30.29.30">
    <property type="entry name" value="Pleckstrin-homology domain (PH domain)/Phosphotyrosine-binding domain (PTB)"/>
    <property type="match status" value="1"/>
</dbReference>
<dbReference type="InterPro" id="IPR019749">
    <property type="entry name" value="Band_41_domain"/>
</dbReference>
<dbReference type="InterPro" id="IPR011174">
    <property type="entry name" value="ERM"/>
</dbReference>
<dbReference type="InterPro" id="IPR011259">
    <property type="entry name" value="ERM_C_dom"/>
</dbReference>
<dbReference type="InterPro" id="IPR041789">
    <property type="entry name" value="ERM_FERM_C"/>
</dbReference>
<dbReference type="InterPro" id="IPR046810">
    <property type="entry name" value="ERM_helical"/>
</dbReference>
<dbReference type="InterPro" id="IPR000798">
    <property type="entry name" value="Ez/rad/moesin-like"/>
</dbReference>
<dbReference type="InterPro" id="IPR014352">
    <property type="entry name" value="FERM/acyl-CoA-bd_prot_sf"/>
</dbReference>
<dbReference type="InterPro" id="IPR035963">
    <property type="entry name" value="FERM_2"/>
</dbReference>
<dbReference type="InterPro" id="IPR019748">
    <property type="entry name" value="FERM_central"/>
</dbReference>
<dbReference type="InterPro" id="IPR019747">
    <property type="entry name" value="FERM_CS"/>
</dbReference>
<dbReference type="InterPro" id="IPR000299">
    <property type="entry name" value="FERM_domain"/>
</dbReference>
<dbReference type="InterPro" id="IPR018979">
    <property type="entry name" value="FERM_N"/>
</dbReference>
<dbReference type="InterPro" id="IPR018980">
    <property type="entry name" value="FERM_PH-like_C"/>
</dbReference>
<dbReference type="InterPro" id="IPR008954">
    <property type="entry name" value="Moesin_tail_sf"/>
</dbReference>
<dbReference type="InterPro" id="IPR011993">
    <property type="entry name" value="PH-like_dom_sf"/>
</dbReference>
<dbReference type="InterPro" id="IPR029071">
    <property type="entry name" value="Ubiquitin-like_domsf"/>
</dbReference>
<dbReference type="PANTHER" id="PTHR23281">
    <property type="entry name" value="MERLIN/MOESIN/EZRIN/RADIXIN"/>
    <property type="match status" value="1"/>
</dbReference>
<dbReference type="Pfam" id="PF00769">
    <property type="entry name" value="ERM_C"/>
    <property type="match status" value="1"/>
</dbReference>
<dbReference type="Pfam" id="PF20492">
    <property type="entry name" value="ERM_helical"/>
    <property type="match status" value="1"/>
</dbReference>
<dbReference type="Pfam" id="PF09380">
    <property type="entry name" value="FERM_C"/>
    <property type="match status" value="1"/>
</dbReference>
<dbReference type="Pfam" id="PF00373">
    <property type="entry name" value="FERM_M"/>
    <property type="match status" value="1"/>
</dbReference>
<dbReference type="Pfam" id="PF09379">
    <property type="entry name" value="FERM_N"/>
    <property type="match status" value="1"/>
</dbReference>
<dbReference type="PIRSF" id="PIRSF002305">
    <property type="entry name" value="ERM"/>
    <property type="match status" value="1"/>
</dbReference>
<dbReference type="PRINTS" id="PR00935">
    <property type="entry name" value="BAND41"/>
</dbReference>
<dbReference type="PRINTS" id="PR00661">
    <property type="entry name" value="ERMFAMILY"/>
</dbReference>
<dbReference type="SMART" id="SM00295">
    <property type="entry name" value="B41"/>
    <property type="match status" value="1"/>
</dbReference>
<dbReference type="SMART" id="SM01196">
    <property type="entry name" value="FERM_C"/>
    <property type="match status" value="1"/>
</dbReference>
<dbReference type="SUPFAM" id="SSF48678">
    <property type="entry name" value="Moesin tail domain"/>
    <property type="match status" value="1"/>
</dbReference>
<dbReference type="SUPFAM" id="SSF50729">
    <property type="entry name" value="PH domain-like"/>
    <property type="match status" value="1"/>
</dbReference>
<dbReference type="SUPFAM" id="SSF47031">
    <property type="entry name" value="Second domain of FERM"/>
    <property type="match status" value="1"/>
</dbReference>
<dbReference type="SUPFAM" id="SSF54236">
    <property type="entry name" value="Ubiquitin-like"/>
    <property type="match status" value="1"/>
</dbReference>
<dbReference type="PROSITE" id="PS00660">
    <property type="entry name" value="FERM_1"/>
    <property type="match status" value="1"/>
</dbReference>
<dbReference type="PROSITE" id="PS00661">
    <property type="entry name" value="FERM_2"/>
    <property type="match status" value="1"/>
</dbReference>
<dbReference type="PROSITE" id="PS50057">
    <property type="entry name" value="FERM_3"/>
    <property type="match status" value="1"/>
</dbReference>